<proteinExistence type="inferred from homology"/>
<protein>
    <recommendedName>
        <fullName evidence="1">Glycine--tRNA ligase alpha subunit</fullName>
        <ecNumber evidence="1">6.1.1.14</ecNumber>
    </recommendedName>
    <alternativeName>
        <fullName evidence="1">Glycyl-tRNA synthetase alpha subunit</fullName>
        <shortName evidence="1">GlyRS</shortName>
    </alternativeName>
</protein>
<dbReference type="EC" id="6.1.1.14" evidence="1"/>
<dbReference type="EMBL" id="AP008230">
    <property type="protein sequence ID" value="BAE84873.1"/>
    <property type="molecule type" value="Genomic_DNA"/>
</dbReference>
<dbReference type="RefSeq" id="WP_011460838.1">
    <property type="nucleotide sequence ID" value="NC_007907.1"/>
</dbReference>
<dbReference type="SMR" id="Q24SW9"/>
<dbReference type="STRING" id="138119.DSY3084"/>
<dbReference type="KEGG" id="dsy:DSY3084"/>
<dbReference type="eggNOG" id="COG0752">
    <property type="taxonomic scope" value="Bacteria"/>
</dbReference>
<dbReference type="HOGENOM" id="CLU_057066_1_0_9"/>
<dbReference type="Proteomes" id="UP000001946">
    <property type="component" value="Chromosome"/>
</dbReference>
<dbReference type="GO" id="GO:0005829">
    <property type="term" value="C:cytosol"/>
    <property type="evidence" value="ECO:0007669"/>
    <property type="project" value="TreeGrafter"/>
</dbReference>
<dbReference type="GO" id="GO:0005524">
    <property type="term" value="F:ATP binding"/>
    <property type="evidence" value="ECO:0007669"/>
    <property type="project" value="UniProtKB-UniRule"/>
</dbReference>
<dbReference type="GO" id="GO:0140096">
    <property type="term" value="F:catalytic activity, acting on a protein"/>
    <property type="evidence" value="ECO:0007669"/>
    <property type="project" value="UniProtKB-ARBA"/>
</dbReference>
<dbReference type="GO" id="GO:0004820">
    <property type="term" value="F:glycine-tRNA ligase activity"/>
    <property type="evidence" value="ECO:0007669"/>
    <property type="project" value="UniProtKB-UniRule"/>
</dbReference>
<dbReference type="GO" id="GO:0016740">
    <property type="term" value="F:transferase activity"/>
    <property type="evidence" value="ECO:0007669"/>
    <property type="project" value="UniProtKB-ARBA"/>
</dbReference>
<dbReference type="GO" id="GO:0006426">
    <property type="term" value="P:glycyl-tRNA aminoacylation"/>
    <property type="evidence" value="ECO:0007669"/>
    <property type="project" value="UniProtKB-UniRule"/>
</dbReference>
<dbReference type="CDD" id="cd00733">
    <property type="entry name" value="GlyRS_alpha_core"/>
    <property type="match status" value="1"/>
</dbReference>
<dbReference type="FunFam" id="3.30.930.10:FF:000006">
    <property type="entry name" value="Glycine--tRNA ligase alpha subunit"/>
    <property type="match status" value="1"/>
</dbReference>
<dbReference type="Gene3D" id="3.30.930.10">
    <property type="entry name" value="Bira Bifunctional Protein, Domain 2"/>
    <property type="match status" value="1"/>
</dbReference>
<dbReference type="Gene3D" id="1.20.58.180">
    <property type="entry name" value="Class II aaRS and biotin synthetases, domain 2"/>
    <property type="match status" value="1"/>
</dbReference>
<dbReference type="HAMAP" id="MF_00254">
    <property type="entry name" value="Gly_tRNA_synth_alpha"/>
    <property type="match status" value="1"/>
</dbReference>
<dbReference type="InterPro" id="IPR045864">
    <property type="entry name" value="aa-tRNA-synth_II/BPL/LPL"/>
</dbReference>
<dbReference type="InterPro" id="IPR006194">
    <property type="entry name" value="Gly-tRNA-synth_heterodimer"/>
</dbReference>
<dbReference type="InterPro" id="IPR002310">
    <property type="entry name" value="Gly-tRNA_ligase_asu"/>
</dbReference>
<dbReference type="NCBIfam" id="TIGR00388">
    <property type="entry name" value="glyQ"/>
    <property type="match status" value="1"/>
</dbReference>
<dbReference type="NCBIfam" id="NF006827">
    <property type="entry name" value="PRK09348.1"/>
    <property type="match status" value="1"/>
</dbReference>
<dbReference type="PANTHER" id="PTHR30075:SF2">
    <property type="entry name" value="GLYCINE--TRNA LIGASE, CHLOROPLASTIC_MITOCHONDRIAL 2"/>
    <property type="match status" value="1"/>
</dbReference>
<dbReference type="PANTHER" id="PTHR30075">
    <property type="entry name" value="GLYCYL-TRNA SYNTHETASE"/>
    <property type="match status" value="1"/>
</dbReference>
<dbReference type="Pfam" id="PF02091">
    <property type="entry name" value="tRNA-synt_2e"/>
    <property type="match status" value="1"/>
</dbReference>
<dbReference type="PRINTS" id="PR01044">
    <property type="entry name" value="TRNASYNTHGA"/>
</dbReference>
<dbReference type="SUPFAM" id="SSF55681">
    <property type="entry name" value="Class II aaRS and biotin synthetases"/>
    <property type="match status" value="1"/>
</dbReference>
<dbReference type="PROSITE" id="PS50861">
    <property type="entry name" value="AA_TRNA_LIGASE_II_GLYAB"/>
    <property type="match status" value="1"/>
</dbReference>
<name>SYGA_DESHY</name>
<comment type="catalytic activity">
    <reaction evidence="1">
        <text>tRNA(Gly) + glycine + ATP = glycyl-tRNA(Gly) + AMP + diphosphate</text>
        <dbReference type="Rhea" id="RHEA:16013"/>
        <dbReference type="Rhea" id="RHEA-COMP:9664"/>
        <dbReference type="Rhea" id="RHEA-COMP:9683"/>
        <dbReference type="ChEBI" id="CHEBI:30616"/>
        <dbReference type="ChEBI" id="CHEBI:33019"/>
        <dbReference type="ChEBI" id="CHEBI:57305"/>
        <dbReference type="ChEBI" id="CHEBI:78442"/>
        <dbReference type="ChEBI" id="CHEBI:78522"/>
        <dbReference type="ChEBI" id="CHEBI:456215"/>
        <dbReference type="EC" id="6.1.1.14"/>
    </reaction>
</comment>
<comment type="subunit">
    <text evidence="1">Tetramer of two alpha and two beta subunits.</text>
</comment>
<comment type="subcellular location">
    <subcellularLocation>
        <location evidence="1">Cytoplasm</location>
    </subcellularLocation>
</comment>
<comment type="similarity">
    <text evidence="1">Belongs to the class-II aminoacyl-tRNA synthetase family.</text>
</comment>
<evidence type="ECO:0000255" key="1">
    <source>
        <dbReference type="HAMAP-Rule" id="MF_00254"/>
    </source>
</evidence>
<accession>Q24SW9</accession>
<keyword id="KW-0030">Aminoacyl-tRNA synthetase</keyword>
<keyword id="KW-0067">ATP-binding</keyword>
<keyword id="KW-0963">Cytoplasm</keyword>
<keyword id="KW-0436">Ligase</keyword>
<keyword id="KW-0547">Nucleotide-binding</keyword>
<keyword id="KW-0648">Protein biosynthesis</keyword>
<keyword id="KW-1185">Reference proteome</keyword>
<gene>
    <name evidence="1" type="primary">glyQ</name>
    <name type="ordered locus">DSY3084</name>
</gene>
<feature type="chain" id="PRO_1000047414" description="Glycine--tRNA ligase alpha subunit">
    <location>
        <begin position="1"/>
        <end position="296"/>
    </location>
</feature>
<organism>
    <name type="scientific">Desulfitobacterium hafniense (strain Y51)</name>
    <dbReference type="NCBI Taxonomy" id="138119"/>
    <lineage>
        <taxon>Bacteria</taxon>
        <taxon>Bacillati</taxon>
        <taxon>Bacillota</taxon>
        <taxon>Clostridia</taxon>
        <taxon>Eubacteriales</taxon>
        <taxon>Desulfitobacteriaceae</taxon>
        <taxon>Desulfitobacterium</taxon>
    </lineage>
</organism>
<reference key="1">
    <citation type="journal article" date="2006" name="J. Bacteriol.">
        <title>Complete genome sequence of the dehalorespiring bacterium Desulfitobacterium hafniense Y51 and comparison with Dehalococcoides ethenogenes 195.</title>
        <authorList>
            <person name="Nonaka H."/>
            <person name="Keresztes G."/>
            <person name="Shinoda Y."/>
            <person name="Ikenaga Y."/>
            <person name="Abe M."/>
            <person name="Naito K."/>
            <person name="Inatomi K."/>
            <person name="Furukawa K."/>
            <person name="Inui M."/>
            <person name="Yukawa H."/>
        </authorList>
    </citation>
    <scope>NUCLEOTIDE SEQUENCE [LARGE SCALE GENOMIC DNA]</scope>
    <source>
        <strain>Y51</strain>
    </source>
</reference>
<sequence length="296" mass="34342">MKFQDMILSLNQFWGEQGCIIAQPYDMEKGAGTFNPNTFLRALGPEPWKVAYIEPSRRPTDGRYGENPNRLQHYFQYQVIIKPSPDNIQELYLQSLERLGVNPKEHDIRFVEDNWESPTLGAWGLGWEVWLDGMEVTQFTYFQQCGGIDCKPVCAEITYGLERLAMYIQNKESVYDIEYVGDITYGDIYLQNEIDYSYYNFRAADVEALQAWFEMYEKEAIRIAEKGLVLPAYDYVLKCSHTFNLLDARGAISVTERTGYIARVRNLARLCAQAYVEQRERLGYPLLKEQSGKEAE</sequence>